<gene>
    <name evidence="1" type="primary">serS</name>
    <name type="ordered locus">SeSA_A1077</name>
</gene>
<sequence>MLDPNLLRNEPDAVAEKLARRGFKLDVDKLRALEERRKVLQVNTENLQAERNSRSKSIGQAKARGEDIEPLRLEVNKLGEELDAAKAELDTLLAEIRNIALTIPNLPADEVPVGKDENDNVEVSRWGTPREFDFEIRDHVTLGEMHSGLDFAAAVKLTGSRFVVMKGQIARMHRALSQFMLDLHTEQHGYSENYVPYLVNHDTLYGTGQLPKFAGDLFHTRPLEEEADSSNYALIPTAEVPLTNLVRDEIIDEDQLPIKMTAHTPCFRSEAGSYGRDTRGLIRMHQFDKVEMVQIVRPEDSMAALEEMTGHAEKVLQLLGLPYRKIILCTGDMGFGACKTYDLEVWVPAQNTYREISSCSNVWDFQARRMQARCRSKSDKKTRLVHTLNGSGLAVGRTLVAVMENYQQADGRIEVPEVLRPYMNELEYIG</sequence>
<accession>B4TRS5</accession>
<comment type="function">
    <text evidence="1">Catalyzes the attachment of serine to tRNA(Ser). Is also able to aminoacylate tRNA(Sec) with serine, to form the misacylated tRNA L-seryl-tRNA(Sec), which will be further converted into selenocysteinyl-tRNA(Sec).</text>
</comment>
<comment type="catalytic activity">
    <reaction evidence="1">
        <text>tRNA(Ser) + L-serine + ATP = L-seryl-tRNA(Ser) + AMP + diphosphate + H(+)</text>
        <dbReference type="Rhea" id="RHEA:12292"/>
        <dbReference type="Rhea" id="RHEA-COMP:9669"/>
        <dbReference type="Rhea" id="RHEA-COMP:9703"/>
        <dbReference type="ChEBI" id="CHEBI:15378"/>
        <dbReference type="ChEBI" id="CHEBI:30616"/>
        <dbReference type="ChEBI" id="CHEBI:33019"/>
        <dbReference type="ChEBI" id="CHEBI:33384"/>
        <dbReference type="ChEBI" id="CHEBI:78442"/>
        <dbReference type="ChEBI" id="CHEBI:78533"/>
        <dbReference type="ChEBI" id="CHEBI:456215"/>
        <dbReference type="EC" id="6.1.1.11"/>
    </reaction>
</comment>
<comment type="catalytic activity">
    <reaction evidence="1">
        <text>tRNA(Sec) + L-serine + ATP = L-seryl-tRNA(Sec) + AMP + diphosphate + H(+)</text>
        <dbReference type="Rhea" id="RHEA:42580"/>
        <dbReference type="Rhea" id="RHEA-COMP:9742"/>
        <dbReference type="Rhea" id="RHEA-COMP:10128"/>
        <dbReference type="ChEBI" id="CHEBI:15378"/>
        <dbReference type="ChEBI" id="CHEBI:30616"/>
        <dbReference type="ChEBI" id="CHEBI:33019"/>
        <dbReference type="ChEBI" id="CHEBI:33384"/>
        <dbReference type="ChEBI" id="CHEBI:78442"/>
        <dbReference type="ChEBI" id="CHEBI:78533"/>
        <dbReference type="ChEBI" id="CHEBI:456215"/>
        <dbReference type="EC" id="6.1.1.11"/>
    </reaction>
</comment>
<comment type="pathway">
    <text evidence="1">Aminoacyl-tRNA biosynthesis; selenocysteinyl-tRNA(Sec) biosynthesis; L-seryl-tRNA(Sec) from L-serine and tRNA(Sec): step 1/1.</text>
</comment>
<comment type="subunit">
    <text evidence="1">Homodimer. The tRNA molecule binds across the dimer.</text>
</comment>
<comment type="subcellular location">
    <subcellularLocation>
        <location evidence="1">Cytoplasm</location>
    </subcellularLocation>
</comment>
<comment type="domain">
    <text evidence="1">Consists of two distinct domains, a catalytic core and a N-terminal extension that is involved in tRNA binding.</text>
</comment>
<comment type="similarity">
    <text evidence="1">Belongs to the class-II aminoacyl-tRNA synthetase family. Type-1 seryl-tRNA synthetase subfamily.</text>
</comment>
<keyword id="KW-0030">Aminoacyl-tRNA synthetase</keyword>
<keyword id="KW-0067">ATP-binding</keyword>
<keyword id="KW-0963">Cytoplasm</keyword>
<keyword id="KW-0436">Ligase</keyword>
<keyword id="KW-0547">Nucleotide-binding</keyword>
<keyword id="KW-0648">Protein biosynthesis</keyword>
<dbReference type="EC" id="6.1.1.11" evidence="1"/>
<dbReference type="EMBL" id="CP001127">
    <property type="protein sequence ID" value="ACF90573.1"/>
    <property type="molecule type" value="Genomic_DNA"/>
</dbReference>
<dbReference type="RefSeq" id="WP_000886698.1">
    <property type="nucleotide sequence ID" value="NC_011094.1"/>
</dbReference>
<dbReference type="SMR" id="B4TRS5"/>
<dbReference type="KEGG" id="sew:SeSA_A1077"/>
<dbReference type="HOGENOM" id="CLU_023797_1_1_6"/>
<dbReference type="UniPathway" id="UPA00906">
    <property type="reaction ID" value="UER00895"/>
</dbReference>
<dbReference type="Proteomes" id="UP000001865">
    <property type="component" value="Chromosome"/>
</dbReference>
<dbReference type="GO" id="GO:0005737">
    <property type="term" value="C:cytoplasm"/>
    <property type="evidence" value="ECO:0007669"/>
    <property type="project" value="UniProtKB-SubCell"/>
</dbReference>
<dbReference type="GO" id="GO:0005524">
    <property type="term" value="F:ATP binding"/>
    <property type="evidence" value="ECO:0007669"/>
    <property type="project" value="UniProtKB-UniRule"/>
</dbReference>
<dbReference type="GO" id="GO:0004828">
    <property type="term" value="F:serine-tRNA ligase activity"/>
    <property type="evidence" value="ECO:0007669"/>
    <property type="project" value="UniProtKB-UniRule"/>
</dbReference>
<dbReference type="GO" id="GO:0016260">
    <property type="term" value="P:selenocysteine biosynthetic process"/>
    <property type="evidence" value="ECO:0007669"/>
    <property type="project" value="UniProtKB-UniRule"/>
</dbReference>
<dbReference type="GO" id="GO:0006434">
    <property type="term" value="P:seryl-tRNA aminoacylation"/>
    <property type="evidence" value="ECO:0007669"/>
    <property type="project" value="UniProtKB-UniRule"/>
</dbReference>
<dbReference type="CDD" id="cd00770">
    <property type="entry name" value="SerRS_core"/>
    <property type="match status" value="1"/>
</dbReference>
<dbReference type="FunFam" id="1.10.287.40:FF:000001">
    <property type="entry name" value="Serine--tRNA ligase"/>
    <property type="match status" value="1"/>
</dbReference>
<dbReference type="FunFam" id="3.30.930.10:FF:000018">
    <property type="entry name" value="Serine--tRNA ligase"/>
    <property type="match status" value="1"/>
</dbReference>
<dbReference type="Gene3D" id="3.30.930.10">
    <property type="entry name" value="Bira Bifunctional Protein, Domain 2"/>
    <property type="match status" value="1"/>
</dbReference>
<dbReference type="Gene3D" id="1.10.287.40">
    <property type="entry name" value="Serine-tRNA synthetase, tRNA binding domain"/>
    <property type="match status" value="1"/>
</dbReference>
<dbReference type="HAMAP" id="MF_00176">
    <property type="entry name" value="Ser_tRNA_synth_type1"/>
    <property type="match status" value="1"/>
</dbReference>
<dbReference type="InterPro" id="IPR002314">
    <property type="entry name" value="aa-tRNA-synt_IIb"/>
</dbReference>
<dbReference type="InterPro" id="IPR006195">
    <property type="entry name" value="aa-tRNA-synth_II"/>
</dbReference>
<dbReference type="InterPro" id="IPR045864">
    <property type="entry name" value="aa-tRNA-synth_II/BPL/LPL"/>
</dbReference>
<dbReference type="InterPro" id="IPR002317">
    <property type="entry name" value="Ser-tRNA-ligase_type_1"/>
</dbReference>
<dbReference type="InterPro" id="IPR015866">
    <property type="entry name" value="Ser-tRNA-synth_1_N"/>
</dbReference>
<dbReference type="InterPro" id="IPR042103">
    <property type="entry name" value="SerRS_1_N_sf"/>
</dbReference>
<dbReference type="InterPro" id="IPR033729">
    <property type="entry name" value="SerRS_core"/>
</dbReference>
<dbReference type="InterPro" id="IPR010978">
    <property type="entry name" value="tRNA-bd_arm"/>
</dbReference>
<dbReference type="NCBIfam" id="TIGR00414">
    <property type="entry name" value="serS"/>
    <property type="match status" value="1"/>
</dbReference>
<dbReference type="PANTHER" id="PTHR43697:SF1">
    <property type="entry name" value="SERINE--TRNA LIGASE"/>
    <property type="match status" value="1"/>
</dbReference>
<dbReference type="PANTHER" id="PTHR43697">
    <property type="entry name" value="SERYL-TRNA SYNTHETASE"/>
    <property type="match status" value="1"/>
</dbReference>
<dbReference type="Pfam" id="PF02403">
    <property type="entry name" value="Seryl_tRNA_N"/>
    <property type="match status" value="1"/>
</dbReference>
<dbReference type="Pfam" id="PF00587">
    <property type="entry name" value="tRNA-synt_2b"/>
    <property type="match status" value="1"/>
</dbReference>
<dbReference type="PIRSF" id="PIRSF001529">
    <property type="entry name" value="Ser-tRNA-synth_IIa"/>
    <property type="match status" value="1"/>
</dbReference>
<dbReference type="PRINTS" id="PR00981">
    <property type="entry name" value="TRNASYNTHSER"/>
</dbReference>
<dbReference type="SUPFAM" id="SSF55681">
    <property type="entry name" value="Class II aaRS and biotin synthetases"/>
    <property type="match status" value="1"/>
</dbReference>
<dbReference type="SUPFAM" id="SSF46589">
    <property type="entry name" value="tRNA-binding arm"/>
    <property type="match status" value="1"/>
</dbReference>
<dbReference type="PROSITE" id="PS50862">
    <property type="entry name" value="AA_TRNA_LIGASE_II"/>
    <property type="match status" value="1"/>
</dbReference>
<reference key="1">
    <citation type="journal article" date="2011" name="J. Bacteriol.">
        <title>Comparative genomics of 28 Salmonella enterica isolates: evidence for CRISPR-mediated adaptive sublineage evolution.</title>
        <authorList>
            <person name="Fricke W.F."/>
            <person name="Mammel M.K."/>
            <person name="McDermott P.F."/>
            <person name="Tartera C."/>
            <person name="White D.G."/>
            <person name="Leclerc J.E."/>
            <person name="Ravel J."/>
            <person name="Cebula T.A."/>
        </authorList>
    </citation>
    <scope>NUCLEOTIDE SEQUENCE [LARGE SCALE GENOMIC DNA]</scope>
    <source>
        <strain>CVM19633</strain>
    </source>
</reference>
<organism>
    <name type="scientific">Salmonella schwarzengrund (strain CVM19633)</name>
    <dbReference type="NCBI Taxonomy" id="439843"/>
    <lineage>
        <taxon>Bacteria</taxon>
        <taxon>Pseudomonadati</taxon>
        <taxon>Pseudomonadota</taxon>
        <taxon>Gammaproteobacteria</taxon>
        <taxon>Enterobacterales</taxon>
        <taxon>Enterobacteriaceae</taxon>
        <taxon>Salmonella</taxon>
    </lineage>
</organism>
<feature type="chain" id="PRO_1000098123" description="Serine--tRNA ligase">
    <location>
        <begin position="1"/>
        <end position="430"/>
    </location>
</feature>
<feature type="binding site" evidence="1">
    <location>
        <begin position="237"/>
        <end position="239"/>
    </location>
    <ligand>
        <name>L-serine</name>
        <dbReference type="ChEBI" id="CHEBI:33384"/>
    </ligand>
</feature>
<feature type="binding site" evidence="1">
    <location>
        <begin position="268"/>
        <end position="270"/>
    </location>
    <ligand>
        <name>ATP</name>
        <dbReference type="ChEBI" id="CHEBI:30616"/>
    </ligand>
</feature>
<feature type="binding site" evidence="1">
    <location>
        <position position="291"/>
    </location>
    <ligand>
        <name>L-serine</name>
        <dbReference type="ChEBI" id="CHEBI:33384"/>
    </ligand>
</feature>
<feature type="binding site" evidence="1">
    <location>
        <begin position="355"/>
        <end position="358"/>
    </location>
    <ligand>
        <name>ATP</name>
        <dbReference type="ChEBI" id="CHEBI:30616"/>
    </ligand>
</feature>
<feature type="binding site" evidence="1">
    <location>
        <position position="391"/>
    </location>
    <ligand>
        <name>L-serine</name>
        <dbReference type="ChEBI" id="CHEBI:33384"/>
    </ligand>
</feature>
<name>SYS_SALSV</name>
<evidence type="ECO:0000255" key="1">
    <source>
        <dbReference type="HAMAP-Rule" id="MF_00176"/>
    </source>
</evidence>
<protein>
    <recommendedName>
        <fullName evidence="1">Serine--tRNA ligase</fullName>
        <ecNumber evidence="1">6.1.1.11</ecNumber>
    </recommendedName>
    <alternativeName>
        <fullName evidence="1">Seryl-tRNA synthetase</fullName>
        <shortName evidence="1">SerRS</shortName>
    </alternativeName>
    <alternativeName>
        <fullName evidence="1">Seryl-tRNA(Ser/Sec) synthetase</fullName>
    </alternativeName>
</protein>
<proteinExistence type="inferred from homology"/>